<reference key="1">
    <citation type="submission" date="2007-05" db="EMBL/GenBank/DDBJ databases">
        <title>Complete sequence of chromosome of Staphylococcus aureus subsp. aureus JH9.</title>
        <authorList>
            <consortium name="US DOE Joint Genome Institute"/>
            <person name="Copeland A."/>
            <person name="Lucas S."/>
            <person name="Lapidus A."/>
            <person name="Barry K."/>
            <person name="Detter J.C."/>
            <person name="Glavina del Rio T."/>
            <person name="Hammon N."/>
            <person name="Israni S."/>
            <person name="Pitluck S."/>
            <person name="Chain P."/>
            <person name="Malfatti S."/>
            <person name="Shin M."/>
            <person name="Vergez L."/>
            <person name="Schmutz J."/>
            <person name="Larimer F."/>
            <person name="Land M."/>
            <person name="Hauser L."/>
            <person name="Kyrpides N."/>
            <person name="Kim E."/>
            <person name="Tomasz A."/>
            <person name="Richardson P."/>
        </authorList>
    </citation>
    <scope>NUCLEOTIDE SEQUENCE [LARGE SCALE GENOMIC DNA]</scope>
    <source>
        <strain>JH9</strain>
    </source>
</reference>
<feature type="chain" id="PRO_1000079967" description="Chromosomal replication initiator protein DnaA">
    <location>
        <begin position="1"/>
        <end position="453"/>
    </location>
</feature>
<feature type="region of interest" description="Domain I, interacts with DnaA modulators" evidence="1">
    <location>
        <begin position="1"/>
        <end position="71"/>
    </location>
</feature>
<feature type="region of interest" description="Domain II" evidence="1">
    <location>
        <begin position="71"/>
        <end position="114"/>
    </location>
</feature>
<feature type="region of interest" description="Domain III, AAA+ region" evidence="1">
    <location>
        <begin position="115"/>
        <end position="331"/>
    </location>
</feature>
<feature type="region of interest" description="Domain IV, binds dsDNA" evidence="1">
    <location>
        <begin position="332"/>
        <end position="453"/>
    </location>
</feature>
<feature type="binding site" evidence="1">
    <location>
        <position position="159"/>
    </location>
    <ligand>
        <name>ATP</name>
        <dbReference type="ChEBI" id="CHEBI:30616"/>
    </ligand>
</feature>
<feature type="binding site" evidence="1">
    <location>
        <position position="161"/>
    </location>
    <ligand>
        <name>ATP</name>
        <dbReference type="ChEBI" id="CHEBI:30616"/>
    </ligand>
</feature>
<feature type="binding site" evidence="1">
    <location>
        <position position="162"/>
    </location>
    <ligand>
        <name>ATP</name>
        <dbReference type="ChEBI" id="CHEBI:30616"/>
    </ligand>
</feature>
<feature type="binding site" evidence="1">
    <location>
        <position position="163"/>
    </location>
    <ligand>
        <name>ATP</name>
        <dbReference type="ChEBI" id="CHEBI:30616"/>
    </ligand>
</feature>
<proteinExistence type="inferred from homology"/>
<organism>
    <name type="scientific">Staphylococcus aureus (strain JH9)</name>
    <dbReference type="NCBI Taxonomy" id="359786"/>
    <lineage>
        <taxon>Bacteria</taxon>
        <taxon>Bacillati</taxon>
        <taxon>Bacillota</taxon>
        <taxon>Bacilli</taxon>
        <taxon>Bacillales</taxon>
        <taxon>Staphylococcaceae</taxon>
        <taxon>Staphylococcus</taxon>
    </lineage>
</organism>
<dbReference type="EMBL" id="CP000703">
    <property type="protein sequence ID" value="ABQ47815.1"/>
    <property type="molecule type" value="Genomic_DNA"/>
</dbReference>
<dbReference type="RefSeq" id="WP_001290433.1">
    <property type="nucleotide sequence ID" value="NC_009487.1"/>
</dbReference>
<dbReference type="SMR" id="A5INP2"/>
<dbReference type="KEGG" id="saj:SaurJH9_0001"/>
<dbReference type="HOGENOM" id="CLU_026910_3_1_9"/>
<dbReference type="GO" id="GO:0005737">
    <property type="term" value="C:cytoplasm"/>
    <property type="evidence" value="ECO:0007669"/>
    <property type="project" value="UniProtKB-SubCell"/>
</dbReference>
<dbReference type="GO" id="GO:0005886">
    <property type="term" value="C:plasma membrane"/>
    <property type="evidence" value="ECO:0007669"/>
    <property type="project" value="TreeGrafter"/>
</dbReference>
<dbReference type="GO" id="GO:0005524">
    <property type="term" value="F:ATP binding"/>
    <property type="evidence" value="ECO:0007669"/>
    <property type="project" value="UniProtKB-UniRule"/>
</dbReference>
<dbReference type="GO" id="GO:0016887">
    <property type="term" value="F:ATP hydrolysis activity"/>
    <property type="evidence" value="ECO:0007669"/>
    <property type="project" value="InterPro"/>
</dbReference>
<dbReference type="GO" id="GO:0003688">
    <property type="term" value="F:DNA replication origin binding"/>
    <property type="evidence" value="ECO:0007669"/>
    <property type="project" value="UniProtKB-UniRule"/>
</dbReference>
<dbReference type="GO" id="GO:0008289">
    <property type="term" value="F:lipid binding"/>
    <property type="evidence" value="ECO:0007669"/>
    <property type="project" value="UniProtKB-KW"/>
</dbReference>
<dbReference type="GO" id="GO:0006270">
    <property type="term" value="P:DNA replication initiation"/>
    <property type="evidence" value="ECO:0007669"/>
    <property type="project" value="UniProtKB-UniRule"/>
</dbReference>
<dbReference type="GO" id="GO:0006275">
    <property type="term" value="P:regulation of DNA replication"/>
    <property type="evidence" value="ECO:0007669"/>
    <property type="project" value="UniProtKB-UniRule"/>
</dbReference>
<dbReference type="CDD" id="cd00009">
    <property type="entry name" value="AAA"/>
    <property type="match status" value="1"/>
</dbReference>
<dbReference type="CDD" id="cd06571">
    <property type="entry name" value="Bac_DnaA_C"/>
    <property type="match status" value="1"/>
</dbReference>
<dbReference type="FunFam" id="1.10.1750.10:FF:000003">
    <property type="entry name" value="Chromosomal replication initiator protein DnaA"/>
    <property type="match status" value="1"/>
</dbReference>
<dbReference type="FunFam" id="1.10.8.60:FF:000003">
    <property type="entry name" value="Chromosomal replication initiator protein DnaA"/>
    <property type="match status" value="1"/>
</dbReference>
<dbReference type="FunFam" id="3.40.50.300:FF:000150">
    <property type="entry name" value="Chromosomal replication initiator protein DnaA"/>
    <property type="match status" value="1"/>
</dbReference>
<dbReference type="Gene3D" id="1.10.1750.10">
    <property type="match status" value="1"/>
</dbReference>
<dbReference type="Gene3D" id="1.10.8.60">
    <property type="match status" value="1"/>
</dbReference>
<dbReference type="Gene3D" id="3.30.300.180">
    <property type="match status" value="1"/>
</dbReference>
<dbReference type="Gene3D" id="3.40.50.300">
    <property type="entry name" value="P-loop containing nucleotide triphosphate hydrolases"/>
    <property type="match status" value="1"/>
</dbReference>
<dbReference type="HAMAP" id="MF_00377">
    <property type="entry name" value="DnaA_bact"/>
    <property type="match status" value="1"/>
</dbReference>
<dbReference type="InterPro" id="IPR003593">
    <property type="entry name" value="AAA+_ATPase"/>
</dbReference>
<dbReference type="InterPro" id="IPR001957">
    <property type="entry name" value="Chromosome_initiator_DnaA"/>
</dbReference>
<dbReference type="InterPro" id="IPR020591">
    <property type="entry name" value="Chromosome_initiator_DnaA-like"/>
</dbReference>
<dbReference type="InterPro" id="IPR018312">
    <property type="entry name" value="Chromosome_initiator_DnaA_CS"/>
</dbReference>
<dbReference type="InterPro" id="IPR013159">
    <property type="entry name" value="DnaA_C"/>
</dbReference>
<dbReference type="InterPro" id="IPR013317">
    <property type="entry name" value="DnaA_dom"/>
</dbReference>
<dbReference type="InterPro" id="IPR024633">
    <property type="entry name" value="DnaA_N_dom"/>
</dbReference>
<dbReference type="InterPro" id="IPR038454">
    <property type="entry name" value="DnaA_N_sf"/>
</dbReference>
<dbReference type="InterPro" id="IPR027417">
    <property type="entry name" value="P-loop_NTPase"/>
</dbReference>
<dbReference type="InterPro" id="IPR010921">
    <property type="entry name" value="Trp_repressor/repl_initiator"/>
</dbReference>
<dbReference type="NCBIfam" id="TIGR00362">
    <property type="entry name" value="DnaA"/>
    <property type="match status" value="1"/>
</dbReference>
<dbReference type="PANTHER" id="PTHR30050">
    <property type="entry name" value="CHROMOSOMAL REPLICATION INITIATOR PROTEIN DNAA"/>
    <property type="match status" value="1"/>
</dbReference>
<dbReference type="PANTHER" id="PTHR30050:SF2">
    <property type="entry name" value="CHROMOSOMAL REPLICATION INITIATOR PROTEIN DNAA"/>
    <property type="match status" value="1"/>
</dbReference>
<dbReference type="Pfam" id="PF00308">
    <property type="entry name" value="Bac_DnaA"/>
    <property type="match status" value="1"/>
</dbReference>
<dbReference type="Pfam" id="PF08299">
    <property type="entry name" value="Bac_DnaA_C"/>
    <property type="match status" value="1"/>
</dbReference>
<dbReference type="Pfam" id="PF11638">
    <property type="entry name" value="DnaA_N"/>
    <property type="match status" value="1"/>
</dbReference>
<dbReference type="PRINTS" id="PR00051">
    <property type="entry name" value="DNAA"/>
</dbReference>
<dbReference type="SMART" id="SM00382">
    <property type="entry name" value="AAA"/>
    <property type="match status" value="1"/>
</dbReference>
<dbReference type="SMART" id="SM00760">
    <property type="entry name" value="Bac_DnaA_C"/>
    <property type="match status" value="1"/>
</dbReference>
<dbReference type="SUPFAM" id="SSF52540">
    <property type="entry name" value="P-loop containing nucleoside triphosphate hydrolases"/>
    <property type="match status" value="1"/>
</dbReference>
<dbReference type="SUPFAM" id="SSF48295">
    <property type="entry name" value="TrpR-like"/>
    <property type="match status" value="1"/>
</dbReference>
<dbReference type="PROSITE" id="PS01008">
    <property type="entry name" value="DNAA"/>
    <property type="match status" value="1"/>
</dbReference>
<evidence type="ECO:0000255" key="1">
    <source>
        <dbReference type="HAMAP-Rule" id="MF_00377"/>
    </source>
</evidence>
<name>DNAA_STAA9</name>
<protein>
    <recommendedName>
        <fullName evidence="1">Chromosomal replication initiator protein DnaA</fullName>
    </recommendedName>
</protein>
<gene>
    <name evidence="1" type="primary">dnaA</name>
    <name type="ordered locus">SaurJH9_0001</name>
</gene>
<comment type="function">
    <text evidence="1">Plays an essential role in the initiation and regulation of chromosomal replication. ATP-DnaA binds to the origin of replication (oriC) to initiate formation of the DNA replication initiation complex once per cell cycle. Binds the DnaA box (a 9 base pair repeat at the origin) and separates the double-stranded (ds)DNA. Forms a right-handed helical filament on oriC DNA; dsDNA binds to the exterior of the filament while single-stranded (ss)DNA is stabiized in the filament's interior. The ATP-DnaA-oriC complex binds and stabilizes one strand of the AT-rich DNA unwinding element (DUE), permitting loading of DNA polymerase. After initiation quickly degrades to an ADP-DnaA complex that is not apt for DNA replication. Binds acidic phospholipids.</text>
</comment>
<comment type="subunit">
    <text evidence="1">Oligomerizes as a right-handed, spiral filament on DNA at oriC.</text>
</comment>
<comment type="subcellular location">
    <subcellularLocation>
        <location evidence="1">Cytoplasm</location>
    </subcellularLocation>
</comment>
<comment type="domain">
    <text evidence="1">Domain I is involved in oligomerization and binding regulators, domain II is flexibile and of varying length in different bacteria, domain III forms the AAA+ region, while domain IV binds dsDNA.</text>
</comment>
<comment type="similarity">
    <text evidence="1">Belongs to the DnaA family.</text>
</comment>
<accession>A5INP2</accession>
<keyword id="KW-0067">ATP-binding</keyword>
<keyword id="KW-0963">Cytoplasm</keyword>
<keyword id="KW-0235">DNA replication</keyword>
<keyword id="KW-0238">DNA-binding</keyword>
<keyword id="KW-0446">Lipid-binding</keyword>
<keyword id="KW-0547">Nucleotide-binding</keyword>
<sequence>MSEKEIWEKVLEIAQEKLSAVSYSTFLKDTELYTIKDGEAIVLSSIPFNANWLNQQYAEIIQAILFDVVGYEVKPHFITTEELANYSNNETATPKETTKPSTETTEDNHVLGREQFNAHNTFDTFVIGPGNRFPHAASLAVAEAPAKAYNPLFIYGGVGLGKTHLMHAIGHHVLDNNPDAKVIYTSSEKFTNEFIKSIRDNEGEAFRERYRNIDVLLIDDIQFIQNKVQTQEEFFYTFNELHQNNKQIVISSDRPPKEIAQLEDRLRSRFEWGLIVDITPPDYETRMAILQKKIEEEKLDIPPEALNYIANQIQSNIRELEGALTRLLAYSQLLGKPITTELTAEALKDIIQAPKSKKITIQDIQKIVGQYYNVRIEDFSAKKRTKSIAYPRQIAMYLSRELTDFSLPKIGEEFGGRDHTTVIHAHEKISKDLKEDPIFKQEVENLEKEIRNV</sequence>